<reference key="1">
    <citation type="submission" date="2008-10" db="EMBL/GenBank/DDBJ databases">
        <title>Genome sequence of Bacillus cereus G9842.</title>
        <authorList>
            <person name="Dodson R.J."/>
            <person name="Durkin A.S."/>
            <person name="Rosovitz M.J."/>
            <person name="Rasko D.A."/>
            <person name="Hoffmaster A."/>
            <person name="Ravel J."/>
            <person name="Sutton G."/>
        </authorList>
    </citation>
    <scope>NUCLEOTIDE SEQUENCE [LARGE SCALE GENOMIC DNA]</scope>
    <source>
        <strain>G9842</strain>
    </source>
</reference>
<proteinExistence type="inferred from homology"/>
<keyword id="KW-0119">Carbohydrate metabolism</keyword>
<keyword id="KW-1003">Cell membrane</keyword>
<keyword id="KW-0328">Glycosyltransferase</keyword>
<keyword id="KW-0444">Lipid biosynthesis</keyword>
<keyword id="KW-0443">Lipid metabolism</keyword>
<keyword id="KW-0472">Membrane</keyword>
<keyword id="KW-0808">Transferase</keyword>
<dbReference type="EC" id="2.4.1.315"/>
<dbReference type="EMBL" id="CP001186">
    <property type="protein sequence ID" value="ACK95619.1"/>
    <property type="molecule type" value="Genomic_DNA"/>
</dbReference>
<dbReference type="RefSeq" id="WP_000594686.1">
    <property type="nucleotide sequence ID" value="NC_011772.1"/>
</dbReference>
<dbReference type="SMR" id="B7IW03"/>
<dbReference type="CAZy" id="GT28">
    <property type="family name" value="Glycosyltransferase Family 28"/>
</dbReference>
<dbReference type="KEGG" id="bcg:BCG9842_B4809"/>
<dbReference type="HOGENOM" id="CLU_028367_0_1_9"/>
<dbReference type="UniPathway" id="UPA00894"/>
<dbReference type="Proteomes" id="UP000006744">
    <property type="component" value="Chromosome"/>
</dbReference>
<dbReference type="GO" id="GO:0005886">
    <property type="term" value="C:plasma membrane"/>
    <property type="evidence" value="ECO:0007669"/>
    <property type="project" value="UniProtKB-SubCell"/>
</dbReference>
<dbReference type="GO" id="GO:0047228">
    <property type="term" value="F:1,2-diacylglycerol 3-glucosyltransferase activity"/>
    <property type="evidence" value="ECO:0007669"/>
    <property type="project" value="UniProtKB-UniRule"/>
</dbReference>
<dbReference type="GO" id="GO:0009246">
    <property type="term" value="P:enterobacterial common antigen biosynthetic process"/>
    <property type="evidence" value="ECO:0007669"/>
    <property type="project" value="UniProtKB-UniPathway"/>
</dbReference>
<dbReference type="GO" id="GO:0009247">
    <property type="term" value="P:glycolipid biosynthetic process"/>
    <property type="evidence" value="ECO:0007669"/>
    <property type="project" value="UniProtKB-UniRule"/>
</dbReference>
<dbReference type="GO" id="GO:0070395">
    <property type="term" value="P:lipoteichoic acid biosynthetic process"/>
    <property type="evidence" value="ECO:0007669"/>
    <property type="project" value="UniProtKB-UniRule"/>
</dbReference>
<dbReference type="CDD" id="cd17507">
    <property type="entry name" value="GT28_Beta-DGS-like"/>
    <property type="match status" value="1"/>
</dbReference>
<dbReference type="Gene3D" id="3.40.50.2000">
    <property type="entry name" value="Glycogen Phosphorylase B"/>
    <property type="match status" value="1"/>
</dbReference>
<dbReference type="HAMAP" id="MF_01280">
    <property type="entry name" value="Diacylglyc_glucosyltr"/>
    <property type="match status" value="1"/>
</dbReference>
<dbReference type="InterPro" id="IPR009695">
    <property type="entry name" value="Diacylglyc_glucosyltr_N"/>
</dbReference>
<dbReference type="InterPro" id="IPR007235">
    <property type="entry name" value="Glyco_trans_28_C"/>
</dbReference>
<dbReference type="InterPro" id="IPR050519">
    <property type="entry name" value="Glycosyltransf_28_UgtP"/>
</dbReference>
<dbReference type="InterPro" id="IPR023589">
    <property type="entry name" value="Pro_diacylglycrl_glcsylTrfase"/>
</dbReference>
<dbReference type="NCBIfam" id="NF010135">
    <property type="entry name" value="PRK13609.1"/>
    <property type="match status" value="1"/>
</dbReference>
<dbReference type="PANTHER" id="PTHR43025">
    <property type="entry name" value="MONOGALACTOSYLDIACYLGLYCEROL SYNTHASE"/>
    <property type="match status" value="1"/>
</dbReference>
<dbReference type="PANTHER" id="PTHR43025:SF3">
    <property type="entry name" value="MONOGALACTOSYLDIACYLGLYCEROL SYNTHASE 1, CHLOROPLASTIC"/>
    <property type="match status" value="1"/>
</dbReference>
<dbReference type="Pfam" id="PF04101">
    <property type="entry name" value="Glyco_tran_28_C"/>
    <property type="match status" value="1"/>
</dbReference>
<dbReference type="Pfam" id="PF06925">
    <property type="entry name" value="MGDG_synth"/>
    <property type="match status" value="1"/>
</dbReference>
<dbReference type="SUPFAM" id="SSF53756">
    <property type="entry name" value="UDP-Glycosyltransferase/glycogen phosphorylase"/>
    <property type="match status" value="1"/>
</dbReference>
<accession>B7IW03</accession>
<feature type="chain" id="PRO_1000140341" description="Processive diacylglycerol beta-glucosyltransferase">
    <location>
        <begin position="1"/>
        <end position="388"/>
    </location>
</feature>
<protein>
    <recommendedName>
        <fullName evidence="1">Processive diacylglycerol beta-glucosyltransferase</fullName>
        <ecNumber>2.4.1.315</ecNumber>
    </recommendedName>
    <alternativeName>
        <fullName evidence="1">Beta-diglucosyldiacylglycerol synthase</fullName>
        <shortName evidence="1">Beta-DGS</shortName>
        <shortName evidence="1">DGlcDAG synthase</shortName>
        <shortName evidence="1">Glc2-DAG synthase</shortName>
    </alternativeName>
    <alternativeName>
        <fullName evidence="1">Beta-gentiobiosyldiacylglycerol synthase</fullName>
    </alternativeName>
    <alternativeName>
        <fullName evidence="1">Beta-monoglucosyldiacylglycerol synthase</fullName>
        <shortName evidence="1">Beta-MGS</shortName>
        <shortName evidence="1">MGlcDAG synthase</shortName>
    </alternativeName>
    <alternativeName>
        <fullName evidence="1">Beta-triglucosyldiacylglycerol synthase</fullName>
        <shortName evidence="1">TGlcDAG synthase</shortName>
    </alternativeName>
    <alternativeName>
        <fullName>Diglucosyl diacylglycerol synthase (1,6-linking)</fullName>
    </alternativeName>
    <alternativeName>
        <fullName evidence="1">Glucosyl-beta-1,6-glucosyldiacylglycerol synthase</fullName>
    </alternativeName>
    <alternativeName>
        <fullName evidence="1">UDP glucosyltransferase</fullName>
    </alternativeName>
    <alternativeName>
        <fullName evidence="1">UDP-glucose:1,2-diacylglycerol-3-beta-D-glucosyltransferase</fullName>
    </alternativeName>
</protein>
<gene>
    <name evidence="1" type="primary">ugtP</name>
    <name type="ordered locus">BCG9842_B4809</name>
</gene>
<organism>
    <name type="scientific">Bacillus cereus (strain G9842)</name>
    <dbReference type="NCBI Taxonomy" id="405531"/>
    <lineage>
        <taxon>Bacteria</taxon>
        <taxon>Bacillati</taxon>
        <taxon>Bacillota</taxon>
        <taxon>Bacilli</taxon>
        <taxon>Bacillales</taxon>
        <taxon>Bacillaceae</taxon>
        <taxon>Bacillus</taxon>
        <taxon>Bacillus cereus group</taxon>
    </lineage>
</organism>
<evidence type="ECO:0000255" key="1">
    <source>
        <dbReference type="HAMAP-Rule" id="MF_01280"/>
    </source>
</evidence>
<name>UGTP_BACC2</name>
<comment type="function">
    <text evidence="1">Processive glucosyltransferase involved in the biosynthesis of both the bilayer- and non-bilayer-forming membrane glucolipids. Is able to successively transfer up to three glucosyl residues to diacylglycerol (DAG), thereby catalyzing the formation of beta-monoglucosyl-DAG (3-O-(beta-D-glucopyranosyl)-1,2-diacyl-sn-glycerol), beta-diglucosyl-DAG (3-O-(beta-D-glucopyranosyl-beta-(1-&gt;6)-D-glucopyranosyl)-1,2-diacyl-sn-glycerol) and beta-triglucosyl-DAG (3-O-(beta-D-glucopyranosyl-beta-(1-&gt;6)-D-glucopyranosyl-beta-(1-&gt;6)-D-glucopyranosyl)-1,2-diacyl-sn-glycerol). Beta-diglucosyl-DAG is the predominant glycolipid found in Bacillales and is also used as a membrane anchor for lipoteichoic acid (LTA).</text>
</comment>
<comment type="catalytic activity">
    <reaction>
        <text>a 1,2-diacyl-3-O-(beta-D-glucopyranosyl)-sn-glycerol + UDP-alpha-D-glucose = a 1,2-diacyl-3-O-(beta-D-Glc-(1-&gt;6)-beta-D-Glc)-sn-glycerol + UDP + H(+)</text>
        <dbReference type="Rhea" id="RHEA:39031"/>
        <dbReference type="ChEBI" id="CHEBI:15378"/>
        <dbReference type="ChEBI" id="CHEBI:58223"/>
        <dbReference type="ChEBI" id="CHEBI:58885"/>
        <dbReference type="ChEBI" id="CHEBI:75799"/>
        <dbReference type="ChEBI" id="CHEBI:76264"/>
        <dbReference type="EC" id="2.4.1.315"/>
    </reaction>
</comment>
<comment type="catalytic activity">
    <reaction>
        <text>a 1,2-diacyl-3-O-(beta-D-Glc-(1-&gt;6)-beta-D-Glc)-sn-glycerol + UDP-alpha-D-glucose = a 1,2-diacyl-3-O-(beta-D-Glc-(1-&gt;6)-beta-D-Glc-(1-&gt;6)-beta-D-Glc)-sn-glycerol + UDP + H(+)</text>
        <dbReference type="Rhea" id="RHEA:39027"/>
        <dbReference type="ChEBI" id="CHEBI:15378"/>
        <dbReference type="ChEBI" id="CHEBI:58223"/>
        <dbReference type="ChEBI" id="CHEBI:58885"/>
        <dbReference type="ChEBI" id="CHEBI:76264"/>
        <dbReference type="ChEBI" id="CHEBI:76265"/>
        <dbReference type="EC" id="2.4.1.315"/>
    </reaction>
</comment>
<comment type="catalytic activity">
    <reaction evidence="1">
        <text>a 1,2-diacyl-sn-glycerol + UDP-alpha-D-glucose = a 1,2-diacyl-3-O-(beta-D-glucopyranosyl)-sn-glycerol + UDP + H(+)</text>
        <dbReference type="Rhea" id="RHEA:17285"/>
        <dbReference type="ChEBI" id="CHEBI:15378"/>
        <dbReference type="ChEBI" id="CHEBI:17815"/>
        <dbReference type="ChEBI" id="CHEBI:58223"/>
        <dbReference type="ChEBI" id="CHEBI:58885"/>
        <dbReference type="ChEBI" id="CHEBI:75799"/>
    </reaction>
</comment>
<comment type="pathway">
    <text evidence="1">Glycolipid metabolism; diglucosyl-diacylglycerol biosynthesis.</text>
</comment>
<comment type="subcellular location">
    <subcellularLocation>
        <location evidence="1">Cell membrane</location>
    </subcellularLocation>
</comment>
<comment type="similarity">
    <text evidence="1">Belongs to the glycosyltransferase 28 family. UgtP subfamily.</text>
</comment>
<sequence length="388" mass="43736">MIKNPKVLILTAHYGNGHVQVAKTLEQTFRQKGIEDVIVCDLFGESHPFITDITKYLYLKSYTIGKELYRLFYYGVEKIYDKKIASWYANFGRKRLKTLLQVEKPDIVINTFPIIAVPELKKQTGISIPVYNVLTDFCVHKIWIHREVDRYFVATDHVKELMVDIGVPAEQIVETGIPIRSSFELKVNPDIIYNKYQLCKNKKILLIVAGAHGVLGNVKELCQSFMSVPNLQVVVVCGKNEALKQDLLSLQNQNSDALKVFGYVENIDELFRVTSCMITKPGGITLSEAAALQVPVILYKPVPGQENENAMYFEKKGAAVVIRDDSEVFAKTEALLQDDVKLLQMKEAMKSIYLPEPAGHIVDAILAENHAEPRHIPIKSPALAQSFT</sequence>